<reference key="1">
    <citation type="journal article" date="2000" name="Science">
        <title>The genome sequence of Drosophila melanogaster.</title>
        <authorList>
            <person name="Adams M.D."/>
            <person name="Celniker S.E."/>
            <person name="Holt R.A."/>
            <person name="Evans C.A."/>
            <person name="Gocayne J.D."/>
            <person name="Amanatides P.G."/>
            <person name="Scherer S.E."/>
            <person name="Li P.W."/>
            <person name="Hoskins R.A."/>
            <person name="Galle R.F."/>
            <person name="George R.A."/>
            <person name="Lewis S.E."/>
            <person name="Richards S."/>
            <person name="Ashburner M."/>
            <person name="Henderson S.N."/>
            <person name="Sutton G.G."/>
            <person name="Wortman J.R."/>
            <person name="Yandell M.D."/>
            <person name="Zhang Q."/>
            <person name="Chen L.X."/>
            <person name="Brandon R.C."/>
            <person name="Rogers Y.-H.C."/>
            <person name="Blazej R.G."/>
            <person name="Champe M."/>
            <person name="Pfeiffer B.D."/>
            <person name="Wan K.H."/>
            <person name="Doyle C."/>
            <person name="Baxter E.G."/>
            <person name="Helt G."/>
            <person name="Nelson C.R."/>
            <person name="Miklos G.L.G."/>
            <person name="Abril J.F."/>
            <person name="Agbayani A."/>
            <person name="An H.-J."/>
            <person name="Andrews-Pfannkoch C."/>
            <person name="Baldwin D."/>
            <person name="Ballew R.M."/>
            <person name="Basu A."/>
            <person name="Baxendale J."/>
            <person name="Bayraktaroglu L."/>
            <person name="Beasley E.M."/>
            <person name="Beeson K.Y."/>
            <person name="Benos P.V."/>
            <person name="Berman B.P."/>
            <person name="Bhandari D."/>
            <person name="Bolshakov S."/>
            <person name="Borkova D."/>
            <person name="Botchan M.R."/>
            <person name="Bouck J."/>
            <person name="Brokstein P."/>
            <person name="Brottier P."/>
            <person name="Burtis K.C."/>
            <person name="Busam D.A."/>
            <person name="Butler H."/>
            <person name="Cadieu E."/>
            <person name="Center A."/>
            <person name="Chandra I."/>
            <person name="Cherry J.M."/>
            <person name="Cawley S."/>
            <person name="Dahlke C."/>
            <person name="Davenport L.B."/>
            <person name="Davies P."/>
            <person name="de Pablos B."/>
            <person name="Delcher A."/>
            <person name="Deng Z."/>
            <person name="Mays A.D."/>
            <person name="Dew I."/>
            <person name="Dietz S.M."/>
            <person name="Dodson K."/>
            <person name="Doup L.E."/>
            <person name="Downes M."/>
            <person name="Dugan-Rocha S."/>
            <person name="Dunkov B.C."/>
            <person name="Dunn P."/>
            <person name="Durbin K.J."/>
            <person name="Evangelista C.C."/>
            <person name="Ferraz C."/>
            <person name="Ferriera S."/>
            <person name="Fleischmann W."/>
            <person name="Fosler C."/>
            <person name="Gabrielian A.E."/>
            <person name="Garg N.S."/>
            <person name="Gelbart W.M."/>
            <person name="Glasser K."/>
            <person name="Glodek A."/>
            <person name="Gong F."/>
            <person name="Gorrell J.H."/>
            <person name="Gu Z."/>
            <person name="Guan P."/>
            <person name="Harris M."/>
            <person name="Harris N.L."/>
            <person name="Harvey D.A."/>
            <person name="Heiman T.J."/>
            <person name="Hernandez J.R."/>
            <person name="Houck J."/>
            <person name="Hostin D."/>
            <person name="Houston K.A."/>
            <person name="Howland T.J."/>
            <person name="Wei M.-H."/>
            <person name="Ibegwam C."/>
            <person name="Jalali M."/>
            <person name="Kalush F."/>
            <person name="Karpen G.H."/>
            <person name="Ke Z."/>
            <person name="Kennison J.A."/>
            <person name="Ketchum K.A."/>
            <person name="Kimmel B.E."/>
            <person name="Kodira C.D."/>
            <person name="Kraft C.L."/>
            <person name="Kravitz S."/>
            <person name="Kulp D."/>
            <person name="Lai Z."/>
            <person name="Lasko P."/>
            <person name="Lei Y."/>
            <person name="Levitsky A.A."/>
            <person name="Li J.H."/>
            <person name="Li Z."/>
            <person name="Liang Y."/>
            <person name="Lin X."/>
            <person name="Liu X."/>
            <person name="Mattei B."/>
            <person name="McIntosh T.C."/>
            <person name="McLeod M.P."/>
            <person name="McPherson D."/>
            <person name="Merkulov G."/>
            <person name="Milshina N.V."/>
            <person name="Mobarry C."/>
            <person name="Morris J."/>
            <person name="Moshrefi A."/>
            <person name="Mount S.M."/>
            <person name="Moy M."/>
            <person name="Murphy B."/>
            <person name="Murphy L."/>
            <person name="Muzny D.M."/>
            <person name="Nelson D.L."/>
            <person name="Nelson D.R."/>
            <person name="Nelson K.A."/>
            <person name="Nixon K."/>
            <person name="Nusskern D.R."/>
            <person name="Pacleb J.M."/>
            <person name="Palazzolo M."/>
            <person name="Pittman G.S."/>
            <person name="Pan S."/>
            <person name="Pollard J."/>
            <person name="Puri V."/>
            <person name="Reese M.G."/>
            <person name="Reinert K."/>
            <person name="Remington K."/>
            <person name="Saunders R.D.C."/>
            <person name="Scheeler F."/>
            <person name="Shen H."/>
            <person name="Shue B.C."/>
            <person name="Siden-Kiamos I."/>
            <person name="Simpson M."/>
            <person name="Skupski M.P."/>
            <person name="Smith T.J."/>
            <person name="Spier E."/>
            <person name="Spradling A.C."/>
            <person name="Stapleton M."/>
            <person name="Strong R."/>
            <person name="Sun E."/>
            <person name="Svirskas R."/>
            <person name="Tector C."/>
            <person name="Turner R."/>
            <person name="Venter E."/>
            <person name="Wang A.H."/>
            <person name="Wang X."/>
            <person name="Wang Z.-Y."/>
            <person name="Wassarman D.A."/>
            <person name="Weinstock G.M."/>
            <person name="Weissenbach J."/>
            <person name="Williams S.M."/>
            <person name="Woodage T."/>
            <person name="Worley K.C."/>
            <person name="Wu D."/>
            <person name="Yang S."/>
            <person name="Yao Q.A."/>
            <person name="Ye J."/>
            <person name="Yeh R.-F."/>
            <person name="Zaveri J.S."/>
            <person name="Zhan M."/>
            <person name="Zhang G."/>
            <person name="Zhao Q."/>
            <person name="Zheng L."/>
            <person name="Zheng X.H."/>
            <person name="Zhong F.N."/>
            <person name="Zhong W."/>
            <person name="Zhou X."/>
            <person name="Zhu S.C."/>
            <person name="Zhu X."/>
            <person name="Smith H.O."/>
            <person name="Gibbs R.A."/>
            <person name="Myers E.W."/>
            <person name="Rubin G.M."/>
            <person name="Venter J.C."/>
        </authorList>
    </citation>
    <scope>NUCLEOTIDE SEQUENCE [LARGE SCALE GENOMIC DNA]</scope>
    <source>
        <strain>Berkeley</strain>
    </source>
</reference>
<reference key="2">
    <citation type="journal article" date="2002" name="Genome Biol.">
        <title>Annotation of the Drosophila melanogaster euchromatic genome: a systematic review.</title>
        <authorList>
            <person name="Misra S."/>
            <person name="Crosby M.A."/>
            <person name="Mungall C.J."/>
            <person name="Matthews B.B."/>
            <person name="Campbell K.S."/>
            <person name="Hradecky P."/>
            <person name="Huang Y."/>
            <person name="Kaminker J.S."/>
            <person name="Millburn G.H."/>
            <person name="Prochnik S.E."/>
            <person name="Smith C.D."/>
            <person name="Tupy J.L."/>
            <person name="Whitfield E.J."/>
            <person name="Bayraktaroglu L."/>
            <person name="Berman B.P."/>
            <person name="Bettencourt B.R."/>
            <person name="Celniker S.E."/>
            <person name="de Grey A.D.N.J."/>
            <person name="Drysdale R.A."/>
            <person name="Harris N.L."/>
            <person name="Richter J."/>
            <person name="Russo S."/>
            <person name="Schroeder A.J."/>
            <person name="Shu S.Q."/>
            <person name="Stapleton M."/>
            <person name="Yamada C."/>
            <person name="Ashburner M."/>
            <person name="Gelbart W.M."/>
            <person name="Rubin G.M."/>
            <person name="Lewis S.E."/>
        </authorList>
    </citation>
    <scope>GENOME REANNOTATION</scope>
    <source>
        <strain>Berkeley</strain>
    </source>
</reference>
<comment type="function">
    <text evidence="1 2">Subunit of the V1 complex of vacuolar(H+)-ATPase (V-ATPase), a multisubunit enzyme composed of a peripheral complex (V1) that hydrolyzes ATP and a membrane integral complex (V0) that translocates protons (By similarity). V-ATPase is responsible for acidifying and maintaining the pH of intracellular compartments and in some cell types, is targeted to the plasma membrane, where it is responsible for acidifying the extracellular environment (By similarity).</text>
</comment>
<comment type="subunit">
    <text evidence="1">V-ATPase is a heteromultimeric enzyme made up of two complexes: the ATP-hydrolytic V1 complex and the proton translocation V0 complex (By similarity). The V1 complex consists of three catalytic AB heterodimers that form a heterohexamer, three peripheral stalks each consisting of EG heterodimers, one central rotor including subunits D and F, and the regulatory subunits C and H (By similarity). The proton translocation complex V0 consists of the proton transport subunit a, a ring of proteolipid subunits c9c'', rotary subunit d, subunits e and f, and the accessory subunits VhaAC45 and ATP6AP2 (By similarity).</text>
</comment>
<comment type="similarity">
    <text evidence="3">Belongs to the V-ATPase F subunit family.</text>
</comment>
<accession>Q9VNL3</accession>
<gene>
    <name type="primary">Vha14-2</name>
    <name type="ORF">CG1076</name>
</gene>
<sequence>MSTPTHNLPRTRVSAFCWVALERSTRIERPTSWSWKELSHYSLIVFHCIPDTTPKQIEECFKKFLRRPDIVIILINQVYADMIRPTVDAHNLAVPTVLEIPSKQHPYDSSRDSILKRAQRVITPPERHY</sequence>
<feature type="chain" id="PRO_0000144807" description="V-type proton ATPase subunit F 2">
    <location>
        <begin position="1"/>
        <end position="129"/>
    </location>
</feature>
<dbReference type="EMBL" id="AE014297">
    <property type="protein sequence ID" value="AAF51917.2"/>
    <property type="molecule type" value="Genomic_DNA"/>
</dbReference>
<dbReference type="RefSeq" id="NP_649614.1">
    <property type="nucleotide sequence ID" value="NM_141357.2"/>
</dbReference>
<dbReference type="SMR" id="Q9VNL3"/>
<dbReference type="FunCoup" id="Q9VNL3">
    <property type="interactions" value="277"/>
</dbReference>
<dbReference type="STRING" id="7227.FBpp0078234"/>
<dbReference type="PaxDb" id="7227-FBpp0078234"/>
<dbReference type="EnsemblMetazoa" id="FBtr0078585">
    <property type="protein sequence ID" value="FBpp0078234"/>
    <property type="gene ID" value="FBgn0037402"/>
</dbReference>
<dbReference type="GeneID" id="40748"/>
<dbReference type="KEGG" id="dme:Dmel_CG1076"/>
<dbReference type="UCSC" id="CG1076-RA">
    <property type="organism name" value="d. melanogaster"/>
</dbReference>
<dbReference type="AGR" id="FB:FBgn0037402"/>
<dbReference type="CTD" id="40748"/>
<dbReference type="FlyBase" id="FBgn0037402">
    <property type="gene designation" value="Vha14-2"/>
</dbReference>
<dbReference type="VEuPathDB" id="VectorBase:FBgn0037402"/>
<dbReference type="eggNOG" id="KOG3432">
    <property type="taxonomic scope" value="Eukaryota"/>
</dbReference>
<dbReference type="GeneTree" id="ENSGT00390000013208"/>
<dbReference type="HOGENOM" id="CLU_1951005_0_0_1"/>
<dbReference type="InParanoid" id="Q9VNL3"/>
<dbReference type="OrthoDB" id="10261947at2759"/>
<dbReference type="PhylomeDB" id="Q9VNL3"/>
<dbReference type="BioGRID-ORCS" id="40748">
    <property type="hits" value="0 hits in 1 CRISPR screen"/>
</dbReference>
<dbReference type="GenomeRNAi" id="40748"/>
<dbReference type="PRO" id="PR:Q9VNL3"/>
<dbReference type="Proteomes" id="UP000000803">
    <property type="component" value="Chromosome 3R"/>
</dbReference>
<dbReference type="Bgee" id="FBgn0037402">
    <property type="expression patterns" value="Expressed in early elongation stage spermatid (Drosophila) in testis and 18 other cell types or tissues"/>
</dbReference>
<dbReference type="ExpressionAtlas" id="Q9VNL3">
    <property type="expression patterns" value="baseline and differential"/>
</dbReference>
<dbReference type="GO" id="GO:0016020">
    <property type="term" value="C:membrane"/>
    <property type="evidence" value="ECO:0000318"/>
    <property type="project" value="GO_Central"/>
</dbReference>
<dbReference type="GO" id="GO:0033176">
    <property type="term" value="C:proton-transporting V-type ATPase complex"/>
    <property type="evidence" value="ECO:0000250"/>
    <property type="project" value="FlyBase"/>
</dbReference>
<dbReference type="GO" id="GO:0033180">
    <property type="term" value="C:proton-transporting V-type ATPase, V1 domain"/>
    <property type="evidence" value="ECO:0007669"/>
    <property type="project" value="InterPro"/>
</dbReference>
<dbReference type="GO" id="GO:0046961">
    <property type="term" value="F:proton-transporting ATPase activity, rotational mechanism"/>
    <property type="evidence" value="ECO:0007669"/>
    <property type="project" value="InterPro"/>
</dbReference>
<dbReference type="GO" id="GO:1902600">
    <property type="term" value="P:proton transmembrane transport"/>
    <property type="evidence" value="ECO:0000305"/>
    <property type="project" value="FlyBase"/>
</dbReference>
<dbReference type="Gene3D" id="3.40.50.10580">
    <property type="entry name" value="ATPase, V1 complex, subunit F"/>
    <property type="match status" value="1"/>
</dbReference>
<dbReference type="InterPro" id="IPR008218">
    <property type="entry name" value="ATPase_V1-cplx_f_g_su"/>
</dbReference>
<dbReference type="InterPro" id="IPR005772">
    <property type="entry name" value="ATPase_V1-cplx_fsu_euk"/>
</dbReference>
<dbReference type="InterPro" id="IPR036906">
    <property type="entry name" value="ATPase_V1_fsu_sf"/>
</dbReference>
<dbReference type="NCBIfam" id="TIGR01101">
    <property type="entry name" value="V_ATP_synt_F"/>
    <property type="match status" value="1"/>
</dbReference>
<dbReference type="PANTHER" id="PTHR13861:SF2">
    <property type="entry name" value="V-TYPE PROTON ATPASE SUBUNIT F"/>
    <property type="match status" value="1"/>
</dbReference>
<dbReference type="PANTHER" id="PTHR13861">
    <property type="entry name" value="VACUOLAR ATP SYNTHASE SUBUNIT F"/>
    <property type="match status" value="1"/>
</dbReference>
<dbReference type="Pfam" id="PF01990">
    <property type="entry name" value="ATP-synt_F"/>
    <property type="match status" value="1"/>
</dbReference>
<dbReference type="PIRSF" id="PIRSF015945">
    <property type="entry name" value="ATPase_V1_F_euk"/>
    <property type="match status" value="1"/>
</dbReference>
<dbReference type="SUPFAM" id="SSF159468">
    <property type="entry name" value="AtpF-like"/>
    <property type="match status" value="1"/>
</dbReference>
<name>VATF2_DROME</name>
<organism>
    <name type="scientific">Drosophila melanogaster</name>
    <name type="common">Fruit fly</name>
    <dbReference type="NCBI Taxonomy" id="7227"/>
    <lineage>
        <taxon>Eukaryota</taxon>
        <taxon>Metazoa</taxon>
        <taxon>Ecdysozoa</taxon>
        <taxon>Arthropoda</taxon>
        <taxon>Hexapoda</taxon>
        <taxon>Insecta</taxon>
        <taxon>Pterygota</taxon>
        <taxon>Neoptera</taxon>
        <taxon>Endopterygota</taxon>
        <taxon>Diptera</taxon>
        <taxon>Brachycera</taxon>
        <taxon>Muscomorpha</taxon>
        <taxon>Ephydroidea</taxon>
        <taxon>Drosophilidae</taxon>
        <taxon>Drosophila</taxon>
        <taxon>Sophophora</taxon>
    </lineage>
</organism>
<proteinExistence type="inferred from homology"/>
<evidence type="ECO:0000250" key="1">
    <source>
        <dbReference type="UniProtKB" id="Q16864"/>
    </source>
</evidence>
<evidence type="ECO:0000250" key="2">
    <source>
        <dbReference type="UniProtKB" id="Q28029"/>
    </source>
</evidence>
<evidence type="ECO:0000305" key="3"/>
<protein>
    <recommendedName>
        <fullName>V-type proton ATPase subunit F 2</fullName>
        <shortName>V-ATPase subunit F 2</shortName>
    </recommendedName>
    <alternativeName>
        <fullName>Vacuolar H+ ATPase subunit 14-2</fullName>
    </alternativeName>
    <alternativeName>
        <fullName>Vacuolar proton pump subunit F 2</fullName>
    </alternativeName>
</protein>
<keyword id="KW-0375">Hydrogen ion transport</keyword>
<keyword id="KW-0406">Ion transport</keyword>
<keyword id="KW-1185">Reference proteome</keyword>
<keyword id="KW-0813">Transport</keyword>